<evidence type="ECO:0000255" key="1">
    <source>
        <dbReference type="HAMAP-Rule" id="MF_01342"/>
    </source>
</evidence>
<evidence type="ECO:0000305" key="2"/>
<feature type="chain" id="PRO_0000251665" description="Large ribosomal subunit protein uL16">
    <location>
        <begin position="1"/>
        <end position="138"/>
    </location>
</feature>
<keyword id="KW-1185">Reference proteome</keyword>
<keyword id="KW-0687">Ribonucleoprotein</keyword>
<keyword id="KW-0689">Ribosomal protein</keyword>
<keyword id="KW-0694">RNA-binding</keyword>
<keyword id="KW-0699">rRNA-binding</keyword>
<keyword id="KW-0820">tRNA-binding</keyword>
<proteinExistence type="inferred from homology"/>
<dbReference type="EMBL" id="CP000230">
    <property type="protein sequence ID" value="ABC23478.1"/>
    <property type="molecule type" value="Genomic_DNA"/>
</dbReference>
<dbReference type="RefSeq" id="WP_011390431.1">
    <property type="nucleotide sequence ID" value="NC_007643.1"/>
</dbReference>
<dbReference type="RefSeq" id="YP_427765.1">
    <property type="nucleotide sequence ID" value="NC_007643.1"/>
</dbReference>
<dbReference type="SMR" id="Q2RQW7"/>
<dbReference type="STRING" id="269796.Rru_A2681"/>
<dbReference type="EnsemblBacteria" id="ABC23478">
    <property type="protein sequence ID" value="ABC23478"/>
    <property type="gene ID" value="Rru_A2681"/>
</dbReference>
<dbReference type="KEGG" id="rru:Rru_A2681"/>
<dbReference type="PATRIC" id="fig|269796.9.peg.2788"/>
<dbReference type="eggNOG" id="COG0197">
    <property type="taxonomic scope" value="Bacteria"/>
</dbReference>
<dbReference type="HOGENOM" id="CLU_078858_2_1_5"/>
<dbReference type="PhylomeDB" id="Q2RQW7"/>
<dbReference type="Proteomes" id="UP000001929">
    <property type="component" value="Chromosome"/>
</dbReference>
<dbReference type="GO" id="GO:0022625">
    <property type="term" value="C:cytosolic large ribosomal subunit"/>
    <property type="evidence" value="ECO:0007669"/>
    <property type="project" value="TreeGrafter"/>
</dbReference>
<dbReference type="GO" id="GO:0019843">
    <property type="term" value="F:rRNA binding"/>
    <property type="evidence" value="ECO:0007669"/>
    <property type="project" value="UniProtKB-UniRule"/>
</dbReference>
<dbReference type="GO" id="GO:0003735">
    <property type="term" value="F:structural constituent of ribosome"/>
    <property type="evidence" value="ECO:0007669"/>
    <property type="project" value="InterPro"/>
</dbReference>
<dbReference type="GO" id="GO:0000049">
    <property type="term" value="F:tRNA binding"/>
    <property type="evidence" value="ECO:0007669"/>
    <property type="project" value="UniProtKB-KW"/>
</dbReference>
<dbReference type="GO" id="GO:0006412">
    <property type="term" value="P:translation"/>
    <property type="evidence" value="ECO:0007669"/>
    <property type="project" value="UniProtKB-UniRule"/>
</dbReference>
<dbReference type="CDD" id="cd01433">
    <property type="entry name" value="Ribosomal_L16_L10e"/>
    <property type="match status" value="1"/>
</dbReference>
<dbReference type="FunFam" id="3.90.1170.10:FF:000001">
    <property type="entry name" value="50S ribosomal protein L16"/>
    <property type="match status" value="1"/>
</dbReference>
<dbReference type="Gene3D" id="3.90.1170.10">
    <property type="entry name" value="Ribosomal protein L10e/L16"/>
    <property type="match status" value="1"/>
</dbReference>
<dbReference type="HAMAP" id="MF_01342">
    <property type="entry name" value="Ribosomal_uL16"/>
    <property type="match status" value="1"/>
</dbReference>
<dbReference type="InterPro" id="IPR047873">
    <property type="entry name" value="Ribosomal_uL16"/>
</dbReference>
<dbReference type="InterPro" id="IPR000114">
    <property type="entry name" value="Ribosomal_uL16_bact-type"/>
</dbReference>
<dbReference type="InterPro" id="IPR020798">
    <property type="entry name" value="Ribosomal_uL16_CS"/>
</dbReference>
<dbReference type="InterPro" id="IPR016180">
    <property type="entry name" value="Ribosomal_uL16_dom"/>
</dbReference>
<dbReference type="InterPro" id="IPR036920">
    <property type="entry name" value="Ribosomal_uL16_sf"/>
</dbReference>
<dbReference type="NCBIfam" id="TIGR01164">
    <property type="entry name" value="rplP_bact"/>
    <property type="match status" value="1"/>
</dbReference>
<dbReference type="PANTHER" id="PTHR12220">
    <property type="entry name" value="50S/60S RIBOSOMAL PROTEIN L16"/>
    <property type="match status" value="1"/>
</dbReference>
<dbReference type="PANTHER" id="PTHR12220:SF13">
    <property type="entry name" value="LARGE RIBOSOMAL SUBUNIT PROTEIN UL16M"/>
    <property type="match status" value="1"/>
</dbReference>
<dbReference type="Pfam" id="PF00252">
    <property type="entry name" value="Ribosomal_L16"/>
    <property type="match status" value="1"/>
</dbReference>
<dbReference type="PRINTS" id="PR00060">
    <property type="entry name" value="RIBOSOMALL16"/>
</dbReference>
<dbReference type="SUPFAM" id="SSF54686">
    <property type="entry name" value="Ribosomal protein L16p/L10e"/>
    <property type="match status" value="1"/>
</dbReference>
<dbReference type="PROSITE" id="PS00586">
    <property type="entry name" value="RIBOSOMAL_L16_1"/>
    <property type="match status" value="1"/>
</dbReference>
<dbReference type="PROSITE" id="PS00701">
    <property type="entry name" value="RIBOSOMAL_L16_2"/>
    <property type="match status" value="1"/>
</dbReference>
<reference key="1">
    <citation type="journal article" date="2011" name="Stand. Genomic Sci.">
        <title>Complete genome sequence of Rhodospirillum rubrum type strain (S1).</title>
        <authorList>
            <person name="Munk A.C."/>
            <person name="Copeland A."/>
            <person name="Lucas S."/>
            <person name="Lapidus A."/>
            <person name="Del Rio T.G."/>
            <person name="Barry K."/>
            <person name="Detter J.C."/>
            <person name="Hammon N."/>
            <person name="Israni S."/>
            <person name="Pitluck S."/>
            <person name="Brettin T."/>
            <person name="Bruce D."/>
            <person name="Han C."/>
            <person name="Tapia R."/>
            <person name="Gilna P."/>
            <person name="Schmutz J."/>
            <person name="Larimer F."/>
            <person name="Land M."/>
            <person name="Kyrpides N.C."/>
            <person name="Mavromatis K."/>
            <person name="Richardson P."/>
            <person name="Rohde M."/>
            <person name="Goeker M."/>
            <person name="Klenk H.P."/>
            <person name="Zhang Y."/>
            <person name="Roberts G.P."/>
            <person name="Reslewic S."/>
            <person name="Schwartz D.C."/>
        </authorList>
    </citation>
    <scope>NUCLEOTIDE SEQUENCE [LARGE SCALE GENOMIC DNA]</scope>
    <source>
        <strain>ATCC 11170 / ATH 1.1.1 / DSM 467 / LMG 4362 / NCIMB 8255 / S1</strain>
    </source>
</reference>
<organism>
    <name type="scientific">Rhodospirillum rubrum (strain ATCC 11170 / ATH 1.1.1 / DSM 467 / LMG 4362 / NCIMB 8255 / S1)</name>
    <dbReference type="NCBI Taxonomy" id="269796"/>
    <lineage>
        <taxon>Bacteria</taxon>
        <taxon>Pseudomonadati</taxon>
        <taxon>Pseudomonadota</taxon>
        <taxon>Alphaproteobacteria</taxon>
        <taxon>Rhodospirillales</taxon>
        <taxon>Rhodospirillaceae</taxon>
        <taxon>Rhodospirillum</taxon>
    </lineage>
</organism>
<sequence>MLSPKRTKFRKQHKGRIHGLAKGGTDLNFGSFGLKAVEPERVTARQIEAARRAITRHMKRQGRLWIRIFPDVPVSKKPAEVRMGSGKGSPEFWVARVKPGRVMFELDGVPEDIARGAFELAAAKLPLKTKFIARIGEV</sequence>
<accession>Q2RQW7</accession>
<gene>
    <name evidence="1" type="primary">rplP</name>
    <name type="ordered locus">Rru_A2681</name>
</gene>
<protein>
    <recommendedName>
        <fullName evidence="1">Large ribosomal subunit protein uL16</fullName>
    </recommendedName>
    <alternativeName>
        <fullName evidence="2">50S ribosomal protein L16</fullName>
    </alternativeName>
</protein>
<comment type="function">
    <text evidence="1">Binds 23S rRNA and is also seen to make contacts with the A and possibly P site tRNAs.</text>
</comment>
<comment type="subunit">
    <text evidence="1">Part of the 50S ribosomal subunit.</text>
</comment>
<comment type="similarity">
    <text evidence="1">Belongs to the universal ribosomal protein uL16 family.</text>
</comment>
<name>RL16_RHORT</name>